<sequence>MITNAISKIIKYDFKNTQLLNEALTHPSVLSKDNNNFNYERLEFLGDAVLNLVVSEMLFNIFPYDTEGNLAKKKTALVCGTKLVEIAQSINLGIFIIMSDGERSCGGANNSNNLENALEALIGAIYLDGGLKAAKDFIFLFWKNSATHMKVPPQDAKTILQEWAQSKGFPAPSYHIINKSGPDHNPCFTVEVRINSHETLHATGHNKKLAEQKAASLMLAKINYKIK</sequence>
<accession>Q5FGH0</accession>
<name>RNC_EHRRG</name>
<comment type="function">
    <text evidence="1">Digests double-stranded RNA. Involved in the processing of primary rRNA transcript to yield the immediate precursors to the large and small rRNAs (23S and 16S). Processes some mRNAs, and tRNAs when they are encoded in the rRNA operon. Processes pre-crRNA and tracrRNA of type II CRISPR loci if present in the organism.</text>
</comment>
<comment type="catalytic activity">
    <reaction evidence="1">
        <text>Endonucleolytic cleavage to 5'-phosphomonoester.</text>
        <dbReference type="EC" id="3.1.26.3"/>
    </reaction>
</comment>
<comment type="cofactor">
    <cofactor evidence="1">
        <name>Mg(2+)</name>
        <dbReference type="ChEBI" id="CHEBI:18420"/>
    </cofactor>
</comment>
<comment type="subunit">
    <text evidence="1">Homodimer.</text>
</comment>
<comment type="subcellular location">
    <subcellularLocation>
        <location evidence="1">Cytoplasm</location>
    </subcellularLocation>
</comment>
<comment type="similarity">
    <text evidence="1">Belongs to the ribonuclease III family.</text>
</comment>
<proteinExistence type="inferred from homology"/>
<organism>
    <name type="scientific">Ehrlichia ruminantium (strain Gardel)</name>
    <dbReference type="NCBI Taxonomy" id="302409"/>
    <lineage>
        <taxon>Bacteria</taxon>
        <taxon>Pseudomonadati</taxon>
        <taxon>Pseudomonadota</taxon>
        <taxon>Alphaproteobacteria</taxon>
        <taxon>Rickettsiales</taxon>
        <taxon>Anaplasmataceae</taxon>
        <taxon>Ehrlichia</taxon>
    </lineage>
</organism>
<protein>
    <recommendedName>
        <fullName evidence="1">Ribonuclease 3</fullName>
        <ecNumber evidence="1">3.1.26.3</ecNumber>
    </recommendedName>
    <alternativeName>
        <fullName evidence="1">Ribonuclease III</fullName>
        <shortName evidence="1">RNase III</shortName>
    </alternativeName>
</protein>
<dbReference type="EC" id="3.1.26.3" evidence="1"/>
<dbReference type="EMBL" id="CR925677">
    <property type="protein sequence ID" value="CAI28297.1"/>
    <property type="molecule type" value="Genomic_DNA"/>
</dbReference>
<dbReference type="RefSeq" id="WP_011255900.1">
    <property type="nucleotide sequence ID" value="NC_006831.1"/>
</dbReference>
<dbReference type="SMR" id="Q5FGH0"/>
<dbReference type="KEGG" id="erg:ERGA_CDS_08450"/>
<dbReference type="HOGENOM" id="CLU_000907_1_1_5"/>
<dbReference type="OrthoDB" id="9805026at2"/>
<dbReference type="Proteomes" id="UP000000533">
    <property type="component" value="Chromosome"/>
</dbReference>
<dbReference type="GO" id="GO:0005737">
    <property type="term" value="C:cytoplasm"/>
    <property type="evidence" value="ECO:0007669"/>
    <property type="project" value="UniProtKB-SubCell"/>
</dbReference>
<dbReference type="GO" id="GO:0003725">
    <property type="term" value="F:double-stranded RNA binding"/>
    <property type="evidence" value="ECO:0007669"/>
    <property type="project" value="TreeGrafter"/>
</dbReference>
<dbReference type="GO" id="GO:0046872">
    <property type="term" value="F:metal ion binding"/>
    <property type="evidence" value="ECO:0007669"/>
    <property type="project" value="UniProtKB-KW"/>
</dbReference>
<dbReference type="GO" id="GO:0004525">
    <property type="term" value="F:ribonuclease III activity"/>
    <property type="evidence" value="ECO:0007669"/>
    <property type="project" value="UniProtKB-UniRule"/>
</dbReference>
<dbReference type="GO" id="GO:0019843">
    <property type="term" value="F:rRNA binding"/>
    <property type="evidence" value="ECO:0007669"/>
    <property type="project" value="UniProtKB-KW"/>
</dbReference>
<dbReference type="GO" id="GO:0006397">
    <property type="term" value="P:mRNA processing"/>
    <property type="evidence" value="ECO:0007669"/>
    <property type="project" value="UniProtKB-UniRule"/>
</dbReference>
<dbReference type="GO" id="GO:0010468">
    <property type="term" value="P:regulation of gene expression"/>
    <property type="evidence" value="ECO:0007669"/>
    <property type="project" value="TreeGrafter"/>
</dbReference>
<dbReference type="GO" id="GO:0006364">
    <property type="term" value="P:rRNA processing"/>
    <property type="evidence" value="ECO:0007669"/>
    <property type="project" value="UniProtKB-UniRule"/>
</dbReference>
<dbReference type="GO" id="GO:0008033">
    <property type="term" value="P:tRNA processing"/>
    <property type="evidence" value="ECO:0007669"/>
    <property type="project" value="UniProtKB-KW"/>
</dbReference>
<dbReference type="CDD" id="cd10845">
    <property type="entry name" value="DSRM_RNAse_III_family"/>
    <property type="match status" value="1"/>
</dbReference>
<dbReference type="CDD" id="cd00593">
    <property type="entry name" value="RIBOc"/>
    <property type="match status" value="1"/>
</dbReference>
<dbReference type="FunFam" id="1.10.1520.10:FF:000001">
    <property type="entry name" value="Ribonuclease 3"/>
    <property type="match status" value="1"/>
</dbReference>
<dbReference type="FunFam" id="3.30.160.20:FF:000003">
    <property type="entry name" value="Ribonuclease 3"/>
    <property type="match status" value="1"/>
</dbReference>
<dbReference type="Gene3D" id="3.30.160.20">
    <property type="match status" value="1"/>
</dbReference>
<dbReference type="Gene3D" id="1.10.1520.10">
    <property type="entry name" value="Ribonuclease III domain"/>
    <property type="match status" value="1"/>
</dbReference>
<dbReference type="HAMAP" id="MF_00104">
    <property type="entry name" value="RNase_III"/>
    <property type="match status" value="1"/>
</dbReference>
<dbReference type="InterPro" id="IPR014720">
    <property type="entry name" value="dsRBD_dom"/>
</dbReference>
<dbReference type="InterPro" id="IPR011907">
    <property type="entry name" value="RNase_III"/>
</dbReference>
<dbReference type="InterPro" id="IPR000999">
    <property type="entry name" value="RNase_III_dom"/>
</dbReference>
<dbReference type="InterPro" id="IPR036389">
    <property type="entry name" value="RNase_III_sf"/>
</dbReference>
<dbReference type="NCBIfam" id="TIGR02191">
    <property type="entry name" value="RNaseIII"/>
    <property type="match status" value="1"/>
</dbReference>
<dbReference type="PANTHER" id="PTHR11207:SF0">
    <property type="entry name" value="RIBONUCLEASE 3"/>
    <property type="match status" value="1"/>
</dbReference>
<dbReference type="PANTHER" id="PTHR11207">
    <property type="entry name" value="RIBONUCLEASE III"/>
    <property type="match status" value="1"/>
</dbReference>
<dbReference type="Pfam" id="PF00035">
    <property type="entry name" value="dsrm"/>
    <property type="match status" value="1"/>
</dbReference>
<dbReference type="Pfam" id="PF14622">
    <property type="entry name" value="Ribonucleas_3_3"/>
    <property type="match status" value="1"/>
</dbReference>
<dbReference type="SMART" id="SM00358">
    <property type="entry name" value="DSRM"/>
    <property type="match status" value="1"/>
</dbReference>
<dbReference type="SMART" id="SM00535">
    <property type="entry name" value="RIBOc"/>
    <property type="match status" value="1"/>
</dbReference>
<dbReference type="SUPFAM" id="SSF54768">
    <property type="entry name" value="dsRNA-binding domain-like"/>
    <property type="match status" value="1"/>
</dbReference>
<dbReference type="SUPFAM" id="SSF69065">
    <property type="entry name" value="RNase III domain-like"/>
    <property type="match status" value="1"/>
</dbReference>
<dbReference type="PROSITE" id="PS50137">
    <property type="entry name" value="DS_RBD"/>
    <property type="match status" value="1"/>
</dbReference>
<dbReference type="PROSITE" id="PS00517">
    <property type="entry name" value="RNASE_3_1"/>
    <property type="match status" value="1"/>
</dbReference>
<dbReference type="PROSITE" id="PS50142">
    <property type="entry name" value="RNASE_3_2"/>
    <property type="match status" value="1"/>
</dbReference>
<keyword id="KW-0963">Cytoplasm</keyword>
<keyword id="KW-0255">Endonuclease</keyword>
<keyword id="KW-0378">Hydrolase</keyword>
<keyword id="KW-0460">Magnesium</keyword>
<keyword id="KW-0479">Metal-binding</keyword>
<keyword id="KW-0507">mRNA processing</keyword>
<keyword id="KW-0540">Nuclease</keyword>
<keyword id="KW-0694">RNA-binding</keyword>
<keyword id="KW-0698">rRNA processing</keyword>
<keyword id="KW-0699">rRNA-binding</keyword>
<keyword id="KW-0819">tRNA processing</keyword>
<evidence type="ECO:0000255" key="1">
    <source>
        <dbReference type="HAMAP-Rule" id="MF_00104"/>
    </source>
</evidence>
<gene>
    <name evidence="1" type="primary">rnc</name>
    <name type="ordered locus">ERGA_CDS_08450</name>
</gene>
<reference key="1">
    <citation type="journal article" date="2006" name="J. Bacteriol.">
        <title>Comparative genomic analysis of three strains of Ehrlichia ruminantium reveals an active process of genome size plasticity.</title>
        <authorList>
            <person name="Frutos R."/>
            <person name="Viari A."/>
            <person name="Ferraz C."/>
            <person name="Morgat A."/>
            <person name="Eychenie S."/>
            <person name="Kandassamy Y."/>
            <person name="Chantal I."/>
            <person name="Bensaid A."/>
            <person name="Coissac E."/>
            <person name="Vachiery N."/>
            <person name="Demaille J."/>
            <person name="Martinez D."/>
        </authorList>
    </citation>
    <scope>NUCLEOTIDE SEQUENCE [LARGE SCALE GENOMIC DNA]</scope>
    <source>
        <strain>Gardel</strain>
    </source>
</reference>
<feature type="chain" id="PRO_0000228528" description="Ribonuclease 3">
    <location>
        <begin position="1"/>
        <end position="227"/>
    </location>
</feature>
<feature type="domain" description="RNase III" evidence="1">
    <location>
        <begin position="3"/>
        <end position="130"/>
    </location>
</feature>
<feature type="domain" description="DRBM" evidence="1">
    <location>
        <begin position="155"/>
        <end position="224"/>
    </location>
</feature>
<feature type="active site" evidence="1">
    <location>
        <position position="47"/>
    </location>
</feature>
<feature type="active site" evidence="1">
    <location>
        <position position="119"/>
    </location>
</feature>
<feature type="binding site" evidence="1">
    <location>
        <position position="43"/>
    </location>
    <ligand>
        <name>Mg(2+)</name>
        <dbReference type="ChEBI" id="CHEBI:18420"/>
    </ligand>
</feature>
<feature type="binding site" evidence="1">
    <location>
        <position position="116"/>
    </location>
    <ligand>
        <name>Mg(2+)</name>
        <dbReference type="ChEBI" id="CHEBI:18420"/>
    </ligand>
</feature>
<feature type="binding site" evidence="1">
    <location>
        <position position="119"/>
    </location>
    <ligand>
        <name>Mg(2+)</name>
        <dbReference type="ChEBI" id="CHEBI:18420"/>
    </ligand>
</feature>